<sequence length="355" mass="39015">MKIRIDIPHHPYDIQIEKGCMAQAGQWLRELWQPQKVVIVTDNHVASLYAEKVKLSLEDAGFQVAVFDFLEGEERKNLTTVQKVYEFLVKQGLTRSDGIVALGGGVVGDLAGFVASTYMRGIHFVQIPTSLTAQVDSSIGGKTGVNTPFAKNMVGTFAQPDGVLIDPLVLETLGKRELIEGMGEVIKYGLIEDPELWALLTGLNGSVESILEHAETLIEHSCQVKRKMVVEDELDNGIRLYLNFGHTIGHAIEATAGYGKVMHGEAVAMGMVQISKVAEEKGLMPAGITQSITEMCQKFGLPVDYENWKVDKLYQALTHDKKARGNTLKLVLVPELGSATIHPVSLEEMKDYLVK</sequence>
<evidence type="ECO:0000255" key="1">
    <source>
        <dbReference type="HAMAP-Rule" id="MF_00110"/>
    </source>
</evidence>
<proteinExistence type="inferred from homology"/>
<comment type="function">
    <text evidence="1">Catalyzes the conversion of 3-deoxy-D-arabino-heptulosonate 7-phosphate (DAHP) to dehydroquinate (DHQ).</text>
</comment>
<comment type="catalytic activity">
    <reaction evidence="1">
        <text>7-phospho-2-dehydro-3-deoxy-D-arabino-heptonate = 3-dehydroquinate + phosphate</text>
        <dbReference type="Rhea" id="RHEA:21968"/>
        <dbReference type="ChEBI" id="CHEBI:32364"/>
        <dbReference type="ChEBI" id="CHEBI:43474"/>
        <dbReference type="ChEBI" id="CHEBI:58394"/>
        <dbReference type="EC" id="4.2.3.4"/>
    </reaction>
</comment>
<comment type="cofactor">
    <cofactor evidence="1">
        <name>Co(2+)</name>
        <dbReference type="ChEBI" id="CHEBI:48828"/>
    </cofactor>
    <cofactor evidence="1">
        <name>Zn(2+)</name>
        <dbReference type="ChEBI" id="CHEBI:29105"/>
    </cofactor>
    <text evidence="1">Binds 1 divalent metal cation per subunit. Can use either Co(2+) or Zn(2+).</text>
</comment>
<comment type="cofactor">
    <cofactor evidence="1">
        <name>NAD(+)</name>
        <dbReference type="ChEBI" id="CHEBI:57540"/>
    </cofactor>
</comment>
<comment type="pathway">
    <text evidence="1">Metabolic intermediate biosynthesis; chorismate biosynthesis; chorismate from D-erythrose 4-phosphate and phosphoenolpyruvate: step 2/7.</text>
</comment>
<comment type="subcellular location">
    <subcellularLocation>
        <location evidence="1">Cytoplasm</location>
    </subcellularLocation>
</comment>
<comment type="similarity">
    <text evidence="1">Belongs to the sugar phosphate cyclases superfamily. Dehydroquinate synthase family.</text>
</comment>
<accession>B2IQJ3</accession>
<gene>
    <name evidence="1" type="primary">aroB</name>
    <name type="ordered locus">SPCG_1365</name>
</gene>
<keyword id="KW-0028">Amino-acid biosynthesis</keyword>
<keyword id="KW-0057">Aromatic amino acid biosynthesis</keyword>
<keyword id="KW-0170">Cobalt</keyword>
<keyword id="KW-0963">Cytoplasm</keyword>
<keyword id="KW-0456">Lyase</keyword>
<keyword id="KW-0479">Metal-binding</keyword>
<keyword id="KW-0520">NAD</keyword>
<keyword id="KW-0547">Nucleotide-binding</keyword>
<keyword id="KW-0862">Zinc</keyword>
<name>AROB_STRPS</name>
<protein>
    <recommendedName>
        <fullName evidence="1">3-dehydroquinate synthase</fullName>
        <shortName evidence="1">DHQS</shortName>
        <ecNumber evidence="1">4.2.3.4</ecNumber>
    </recommendedName>
</protein>
<feature type="chain" id="PRO_1000094638" description="3-dehydroquinate synthase">
    <location>
        <begin position="1"/>
        <end position="355"/>
    </location>
</feature>
<feature type="binding site" evidence="1">
    <location>
        <begin position="71"/>
        <end position="76"/>
    </location>
    <ligand>
        <name>NAD(+)</name>
        <dbReference type="ChEBI" id="CHEBI:57540"/>
    </ligand>
</feature>
<feature type="binding site" evidence="1">
    <location>
        <begin position="105"/>
        <end position="109"/>
    </location>
    <ligand>
        <name>NAD(+)</name>
        <dbReference type="ChEBI" id="CHEBI:57540"/>
    </ligand>
</feature>
<feature type="binding site" evidence="1">
    <location>
        <begin position="129"/>
        <end position="130"/>
    </location>
    <ligand>
        <name>NAD(+)</name>
        <dbReference type="ChEBI" id="CHEBI:57540"/>
    </ligand>
</feature>
<feature type="binding site" evidence="1">
    <location>
        <position position="142"/>
    </location>
    <ligand>
        <name>NAD(+)</name>
        <dbReference type="ChEBI" id="CHEBI:57540"/>
    </ligand>
</feature>
<feature type="binding site" evidence="1">
    <location>
        <position position="151"/>
    </location>
    <ligand>
        <name>NAD(+)</name>
        <dbReference type="ChEBI" id="CHEBI:57540"/>
    </ligand>
</feature>
<feature type="binding site" evidence="1">
    <location>
        <position position="184"/>
    </location>
    <ligand>
        <name>Zn(2+)</name>
        <dbReference type="ChEBI" id="CHEBI:29105"/>
    </ligand>
</feature>
<feature type="binding site" evidence="1">
    <location>
        <position position="246"/>
    </location>
    <ligand>
        <name>Zn(2+)</name>
        <dbReference type="ChEBI" id="CHEBI:29105"/>
    </ligand>
</feature>
<feature type="binding site" evidence="1">
    <location>
        <position position="263"/>
    </location>
    <ligand>
        <name>Zn(2+)</name>
        <dbReference type="ChEBI" id="CHEBI:29105"/>
    </ligand>
</feature>
<dbReference type="EC" id="4.2.3.4" evidence="1"/>
<dbReference type="EMBL" id="CP001033">
    <property type="protein sequence ID" value="ACB90617.1"/>
    <property type="molecule type" value="Genomic_DNA"/>
</dbReference>
<dbReference type="RefSeq" id="WP_000702173.1">
    <property type="nucleotide sequence ID" value="NC_010582.1"/>
</dbReference>
<dbReference type="SMR" id="B2IQJ3"/>
<dbReference type="KEGG" id="spw:SPCG_1365"/>
<dbReference type="HOGENOM" id="CLU_001201_0_2_9"/>
<dbReference type="UniPathway" id="UPA00053">
    <property type="reaction ID" value="UER00085"/>
</dbReference>
<dbReference type="GO" id="GO:0005737">
    <property type="term" value="C:cytoplasm"/>
    <property type="evidence" value="ECO:0007669"/>
    <property type="project" value="UniProtKB-SubCell"/>
</dbReference>
<dbReference type="GO" id="GO:0003856">
    <property type="term" value="F:3-dehydroquinate synthase activity"/>
    <property type="evidence" value="ECO:0007669"/>
    <property type="project" value="UniProtKB-UniRule"/>
</dbReference>
<dbReference type="GO" id="GO:0046872">
    <property type="term" value="F:metal ion binding"/>
    <property type="evidence" value="ECO:0007669"/>
    <property type="project" value="UniProtKB-KW"/>
</dbReference>
<dbReference type="GO" id="GO:0000166">
    <property type="term" value="F:nucleotide binding"/>
    <property type="evidence" value="ECO:0007669"/>
    <property type="project" value="UniProtKB-KW"/>
</dbReference>
<dbReference type="GO" id="GO:0008652">
    <property type="term" value="P:amino acid biosynthetic process"/>
    <property type="evidence" value="ECO:0007669"/>
    <property type="project" value="UniProtKB-KW"/>
</dbReference>
<dbReference type="GO" id="GO:0009073">
    <property type="term" value="P:aromatic amino acid family biosynthetic process"/>
    <property type="evidence" value="ECO:0007669"/>
    <property type="project" value="UniProtKB-KW"/>
</dbReference>
<dbReference type="GO" id="GO:0009423">
    <property type="term" value="P:chorismate biosynthetic process"/>
    <property type="evidence" value="ECO:0007669"/>
    <property type="project" value="UniProtKB-UniRule"/>
</dbReference>
<dbReference type="CDD" id="cd08195">
    <property type="entry name" value="DHQS"/>
    <property type="match status" value="1"/>
</dbReference>
<dbReference type="FunFam" id="1.20.1090.10:FF:000012">
    <property type="entry name" value="3-dehydroquinate synthase"/>
    <property type="match status" value="1"/>
</dbReference>
<dbReference type="FunFam" id="3.40.50.1970:FF:000001">
    <property type="entry name" value="3-dehydroquinate synthase"/>
    <property type="match status" value="1"/>
</dbReference>
<dbReference type="Gene3D" id="3.40.50.1970">
    <property type="match status" value="1"/>
</dbReference>
<dbReference type="Gene3D" id="1.20.1090.10">
    <property type="entry name" value="Dehydroquinate synthase-like - alpha domain"/>
    <property type="match status" value="1"/>
</dbReference>
<dbReference type="HAMAP" id="MF_00110">
    <property type="entry name" value="DHQ_synthase"/>
    <property type="match status" value="1"/>
</dbReference>
<dbReference type="InterPro" id="IPR050071">
    <property type="entry name" value="Dehydroquinate_synthase"/>
</dbReference>
<dbReference type="InterPro" id="IPR016037">
    <property type="entry name" value="DHQ_synth_AroB"/>
</dbReference>
<dbReference type="InterPro" id="IPR030963">
    <property type="entry name" value="DHQ_synth_fam"/>
</dbReference>
<dbReference type="InterPro" id="IPR030960">
    <property type="entry name" value="DHQS/DOIS_N"/>
</dbReference>
<dbReference type="InterPro" id="IPR056179">
    <property type="entry name" value="DHQS_C"/>
</dbReference>
<dbReference type="NCBIfam" id="TIGR01357">
    <property type="entry name" value="aroB"/>
    <property type="match status" value="1"/>
</dbReference>
<dbReference type="PANTHER" id="PTHR43622">
    <property type="entry name" value="3-DEHYDROQUINATE SYNTHASE"/>
    <property type="match status" value="1"/>
</dbReference>
<dbReference type="PANTHER" id="PTHR43622:SF7">
    <property type="entry name" value="3-DEHYDROQUINATE SYNTHASE, CHLOROPLASTIC"/>
    <property type="match status" value="1"/>
</dbReference>
<dbReference type="Pfam" id="PF01761">
    <property type="entry name" value="DHQ_synthase"/>
    <property type="match status" value="1"/>
</dbReference>
<dbReference type="Pfam" id="PF24621">
    <property type="entry name" value="DHQS_C"/>
    <property type="match status" value="1"/>
</dbReference>
<dbReference type="PIRSF" id="PIRSF001455">
    <property type="entry name" value="DHQ_synth"/>
    <property type="match status" value="1"/>
</dbReference>
<dbReference type="SUPFAM" id="SSF56796">
    <property type="entry name" value="Dehydroquinate synthase-like"/>
    <property type="match status" value="1"/>
</dbReference>
<organism>
    <name type="scientific">Streptococcus pneumoniae (strain CGSP14)</name>
    <dbReference type="NCBI Taxonomy" id="516950"/>
    <lineage>
        <taxon>Bacteria</taxon>
        <taxon>Bacillati</taxon>
        <taxon>Bacillota</taxon>
        <taxon>Bacilli</taxon>
        <taxon>Lactobacillales</taxon>
        <taxon>Streptococcaceae</taxon>
        <taxon>Streptococcus</taxon>
    </lineage>
</organism>
<reference key="1">
    <citation type="journal article" date="2009" name="BMC Genomics">
        <title>Genome evolution driven by host adaptations results in a more virulent and antimicrobial-resistant Streptococcus pneumoniae serotype 14.</title>
        <authorList>
            <person name="Ding F."/>
            <person name="Tang P."/>
            <person name="Hsu M.-H."/>
            <person name="Cui P."/>
            <person name="Hu S."/>
            <person name="Yu J."/>
            <person name="Chiu C.-H."/>
        </authorList>
    </citation>
    <scope>NUCLEOTIDE SEQUENCE [LARGE SCALE GENOMIC DNA]</scope>
    <source>
        <strain>CGSP14</strain>
    </source>
</reference>